<keyword id="KW-0010">Activator</keyword>
<keyword id="KW-0240">DNA-directed RNA polymerase</keyword>
<keyword id="KW-0244">Early protein</keyword>
<keyword id="KW-0548">Nucleotidyltransferase</keyword>
<keyword id="KW-0731">Sigma factor</keyword>
<keyword id="KW-0804">Transcription</keyword>
<keyword id="KW-0805">Transcription regulation</keyword>
<keyword id="KW-0808">Transferase</keyword>
<organismHost>
    <name type="scientific">Bacillus subtilis</name>
    <dbReference type="NCBI Taxonomy" id="1423"/>
</organismHost>
<protein>
    <recommendedName>
        <fullName>Late genes activator</fullName>
    </recommendedName>
    <alternativeName>
        <fullName>Early protein GP4</fullName>
    </alternativeName>
    <alternativeName>
        <fullName>GPF</fullName>
    </alternativeName>
</protein>
<evidence type="ECO:0000250" key="1"/>
<evidence type="ECO:0000255" key="2"/>
<evidence type="ECO:0000305" key="3"/>
<reference key="1">
    <citation type="journal article" date="1986" name="Gene">
        <title>Nucleotide sequence of gene F of Bacillus phage Nf.</title>
        <authorList>
            <person name="Mizukami Y."/>
            <person name="Sekiya T."/>
            <person name="Hirokawa H."/>
        </authorList>
    </citation>
    <scope>NUCLEOTIDE SEQUENCE [GENOMIC DNA]</scope>
</reference>
<sequence length="125" mass="15019">MPRTARGIYHNLKESEYVVSNGDATFFFFSEMYQNKFLDGYQKHREEFNKKINRITDTPLNMDMLADITFYSNVEKRGFHAWLKGVNTTWQEIHVYALRTMTKPCTQNWSRIRKPKLVERRKSMV</sequence>
<proteinExistence type="inferred from homology"/>
<name>VG4_BPNF</name>
<accession>P09877</accession>
<comment type="function">
    <text evidence="1">This protein is believed to be a positive regulator of late transcription. It may function as a sigma-like component of the host RNA polymerase. Binds to a region of the A3 promoter located between nucleotides -50 and -100 relative to the transcription start site, that presents a sequence-directed curvature. Full induction of this curvature is needed for the transcription activation process (By similarity).</text>
</comment>
<comment type="similarity">
    <text evidence="3">Belongs to the podoviruses GP4 family.</text>
</comment>
<dbReference type="EMBL" id="M13664">
    <property type="protein sequence ID" value="AAA32195.1"/>
    <property type="molecule type" value="Genomic_DNA"/>
</dbReference>
<dbReference type="PIR" id="A25643">
    <property type="entry name" value="ERBPNF"/>
</dbReference>
<dbReference type="SMR" id="P09877"/>
<dbReference type="GO" id="GO:0000428">
    <property type="term" value="C:DNA-directed RNA polymerase complex"/>
    <property type="evidence" value="ECO:0007669"/>
    <property type="project" value="UniProtKB-KW"/>
</dbReference>
<dbReference type="GO" id="GO:0003899">
    <property type="term" value="F:DNA-directed RNA polymerase activity"/>
    <property type="evidence" value="ECO:0007669"/>
    <property type="project" value="InterPro"/>
</dbReference>
<dbReference type="GO" id="GO:0016987">
    <property type="term" value="F:sigma factor activity"/>
    <property type="evidence" value="ECO:0007669"/>
    <property type="project" value="UniProtKB-KW"/>
</dbReference>
<dbReference type="Gene3D" id="3.30.70.3560">
    <property type="entry name" value="Phi-29-like late genes activator, P4"/>
    <property type="match status" value="1"/>
</dbReference>
<dbReference type="InterPro" id="IPR038246">
    <property type="entry name" value="Phi-29-like_sf"/>
</dbReference>
<dbReference type="InterPro" id="IPR008771">
    <property type="entry name" value="Phi-29_GP4"/>
</dbReference>
<dbReference type="Pfam" id="PF05464">
    <property type="entry name" value="Phi-29_GP4"/>
    <property type="match status" value="1"/>
</dbReference>
<organism>
    <name type="scientific">Bacillus phage Nf</name>
    <name type="common">Bacteriophage Nf</name>
    <dbReference type="NCBI Taxonomy" id="2992639"/>
    <lineage>
        <taxon>Viruses</taxon>
        <taxon>Duplodnaviria</taxon>
        <taxon>Heunggongvirae</taxon>
        <taxon>Uroviricota</taxon>
        <taxon>Caudoviricetes</taxon>
        <taxon>Salasmaviridae</taxon>
        <taxon>Picovirinae</taxon>
        <taxon>Beecentumtrevirus</taxon>
        <taxon>Beecentumtrevirus Nf</taxon>
    </lineage>
</organism>
<feature type="chain" id="PRO_0000106559" description="Late genes activator">
    <location>
        <begin position="1"/>
        <end position="125"/>
    </location>
</feature>
<feature type="DNA-binding region" description="H-T-H motif" evidence="2">
    <location>
        <begin position="77"/>
        <end position="96"/>
    </location>
</feature>
<gene>
    <name type="primary">4</name>
    <name type="synonym">F</name>
</gene>